<keyword id="KW-0067">ATP-binding</keyword>
<keyword id="KW-0347">Helicase</keyword>
<keyword id="KW-0378">Hydrolase</keyword>
<keyword id="KW-0547">Nucleotide-binding</keyword>
<keyword id="KW-0539">Nucleus</keyword>
<keyword id="KW-1185">Reference proteome</keyword>
<keyword id="KW-0690">Ribosome biogenesis</keyword>
<keyword id="KW-0694">RNA-binding</keyword>
<keyword id="KW-0698">rRNA processing</keyword>
<dbReference type="EC" id="3.6.4.13"/>
<dbReference type="EMBL" id="DS027698">
    <property type="protein sequence ID" value="EAW16110.1"/>
    <property type="molecule type" value="Genomic_DNA"/>
</dbReference>
<dbReference type="RefSeq" id="XP_001258007.1">
    <property type="nucleotide sequence ID" value="XM_001258006.1"/>
</dbReference>
<dbReference type="SMR" id="A1DMT9"/>
<dbReference type="STRING" id="331117.A1DMT9"/>
<dbReference type="EnsemblFungi" id="EAW16110">
    <property type="protein sequence ID" value="EAW16110"/>
    <property type="gene ID" value="NFIA_054560"/>
</dbReference>
<dbReference type="GeneID" id="4584522"/>
<dbReference type="KEGG" id="nfi:NFIA_054560"/>
<dbReference type="VEuPathDB" id="FungiDB:NFIA_054560"/>
<dbReference type="eggNOG" id="KOG0347">
    <property type="taxonomic scope" value="Eukaryota"/>
</dbReference>
<dbReference type="HOGENOM" id="CLU_003041_13_0_1"/>
<dbReference type="OMA" id="QMIQKAR"/>
<dbReference type="OrthoDB" id="4310724at2759"/>
<dbReference type="Proteomes" id="UP000006702">
    <property type="component" value="Unassembled WGS sequence"/>
</dbReference>
<dbReference type="GO" id="GO:0005730">
    <property type="term" value="C:nucleolus"/>
    <property type="evidence" value="ECO:0007669"/>
    <property type="project" value="UniProtKB-SubCell"/>
</dbReference>
<dbReference type="GO" id="GO:0005524">
    <property type="term" value="F:ATP binding"/>
    <property type="evidence" value="ECO:0007669"/>
    <property type="project" value="UniProtKB-KW"/>
</dbReference>
<dbReference type="GO" id="GO:0016887">
    <property type="term" value="F:ATP hydrolysis activity"/>
    <property type="evidence" value="ECO:0007669"/>
    <property type="project" value="RHEA"/>
</dbReference>
<dbReference type="GO" id="GO:0003723">
    <property type="term" value="F:RNA binding"/>
    <property type="evidence" value="ECO:0007669"/>
    <property type="project" value="UniProtKB-KW"/>
</dbReference>
<dbReference type="GO" id="GO:0003724">
    <property type="term" value="F:RNA helicase activity"/>
    <property type="evidence" value="ECO:0007669"/>
    <property type="project" value="UniProtKB-EC"/>
</dbReference>
<dbReference type="GO" id="GO:0006364">
    <property type="term" value="P:rRNA processing"/>
    <property type="evidence" value="ECO:0007669"/>
    <property type="project" value="UniProtKB-KW"/>
</dbReference>
<dbReference type="CDD" id="cd17946">
    <property type="entry name" value="DEADc_DDX24"/>
    <property type="match status" value="1"/>
</dbReference>
<dbReference type="CDD" id="cd18787">
    <property type="entry name" value="SF2_C_DEAD"/>
    <property type="match status" value="1"/>
</dbReference>
<dbReference type="Gene3D" id="3.40.50.300">
    <property type="entry name" value="P-loop containing nucleotide triphosphate hydrolases"/>
    <property type="match status" value="2"/>
</dbReference>
<dbReference type="InterPro" id="IPR011545">
    <property type="entry name" value="DEAD/DEAH_box_helicase_dom"/>
</dbReference>
<dbReference type="InterPro" id="IPR014001">
    <property type="entry name" value="Helicase_ATP-bd"/>
</dbReference>
<dbReference type="InterPro" id="IPR001650">
    <property type="entry name" value="Helicase_C-like"/>
</dbReference>
<dbReference type="InterPro" id="IPR027417">
    <property type="entry name" value="P-loop_NTPase"/>
</dbReference>
<dbReference type="InterPro" id="IPR000629">
    <property type="entry name" value="RNA-helicase_DEAD-box_CS"/>
</dbReference>
<dbReference type="InterPro" id="IPR014014">
    <property type="entry name" value="RNA_helicase_DEAD_Q_motif"/>
</dbReference>
<dbReference type="PANTHER" id="PTHR24031">
    <property type="entry name" value="RNA HELICASE"/>
    <property type="match status" value="1"/>
</dbReference>
<dbReference type="Pfam" id="PF00270">
    <property type="entry name" value="DEAD"/>
    <property type="match status" value="1"/>
</dbReference>
<dbReference type="Pfam" id="PF00271">
    <property type="entry name" value="Helicase_C"/>
    <property type="match status" value="1"/>
</dbReference>
<dbReference type="SMART" id="SM00487">
    <property type="entry name" value="DEXDc"/>
    <property type="match status" value="1"/>
</dbReference>
<dbReference type="SMART" id="SM00490">
    <property type="entry name" value="HELICc"/>
    <property type="match status" value="1"/>
</dbReference>
<dbReference type="SUPFAM" id="SSF52540">
    <property type="entry name" value="P-loop containing nucleoside triphosphate hydrolases"/>
    <property type="match status" value="1"/>
</dbReference>
<dbReference type="PROSITE" id="PS00039">
    <property type="entry name" value="DEAD_ATP_HELICASE"/>
    <property type="match status" value="1"/>
</dbReference>
<dbReference type="PROSITE" id="PS51192">
    <property type="entry name" value="HELICASE_ATP_BIND_1"/>
    <property type="match status" value="1"/>
</dbReference>
<dbReference type="PROSITE" id="PS51194">
    <property type="entry name" value="HELICASE_CTER"/>
    <property type="match status" value="1"/>
</dbReference>
<dbReference type="PROSITE" id="PS51195">
    <property type="entry name" value="Q_MOTIF"/>
    <property type="match status" value="1"/>
</dbReference>
<feature type="chain" id="PRO_0000282487" description="ATP-dependent RNA helicase mak5">
    <location>
        <begin position="1"/>
        <end position="777"/>
    </location>
</feature>
<feature type="domain" description="Helicase ATP-binding" evidence="2">
    <location>
        <begin position="232"/>
        <end position="444"/>
    </location>
</feature>
<feature type="domain" description="Helicase C-terminal" evidence="3">
    <location>
        <begin position="496"/>
        <end position="646"/>
    </location>
</feature>
<feature type="region of interest" description="Disordered" evidence="4">
    <location>
        <begin position="1"/>
        <end position="36"/>
    </location>
</feature>
<feature type="region of interest" description="Disordered" evidence="4">
    <location>
        <begin position="86"/>
        <end position="177"/>
    </location>
</feature>
<feature type="region of interest" description="Disordered" evidence="4">
    <location>
        <begin position="393"/>
        <end position="417"/>
    </location>
</feature>
<feature type="region of interest" description="Disordered" evidence="4">
    <location>
        <begin position="692"/>
        <end position="720"/>
    </location>
</feature>
<feature type="short sequence motif" description="Q motif">
    <location>
        <begin position="201"/>
        <end position="229"/>
    </location>
</feature>
<feature type="short sequence motif" description="DEAD box">
    <location>
        <begin position="370"/>
        <end position="373"/>
    </location>
</feature>
<feature type="compositionally biased region" description="Basic and acidic residues" evidence="4">
    <location>
        <begin position="1"/>
        <end position="10"/>
    </location>
</feature>
<feature type="compositionally biased region" description="Acidic residues" evidence="4">
    <location>
        <begin position="101"/>
        <end position="119"/>
    </location>
</feature>
<feature type="compositionally biased region" description="Basic and acidic residues" evidence="4">
    <location>
        <begin position="130"/>
        <end position="171"/>
    </location>
</feature>
<feature type="compositionally biased region" description="Basic residues" evidence="4">
    <location>
        <begin position="703"/>
        <end position="713"/>
    </location>
</feature>
<feature type="binding site" evidence="2">
    <location>
        <begin position="245"/>
        <end position="252"/>
    </location>
    <ligand>
        <name>ATP</name>
        <dbReference type="ChEBI" id="CHEBI:30616"/>
    </ligand>
</feature>
<gene>
    <name type="primary">mak5</name>
    <name type="ORF">NFIA_054560</name>
</gene>
<proteinExistence type="inferred from homology"/>
<protein>
    <recommendedName>
        <fullName>ATP-dependent RNA helicase mak5</fullName>
        <ecNumber>3.6.4.13</ecNumber>
    </recommendedName>
</protein>
<organism>
    <name type="scientific">Neosartorya fischeri (strain ATCC 1020 / DSM 3700 / CBS 544.65 / FGSC A1164 / JCM 1740 / NRRL 181 / WB 181)</name>
    <name type="common">Aspergillus fischerianus</name>
    <dbReference type="NCBI Taxonomy" id="331117"/>
    <lineage>
        <taxon>Eukaryota</taxon>
        <taxon>Fungi</taxon>
        <taxon>Dikarya</taxon>
        <taxon>Ascomycota</taxon>
        <taxon>Pezizomycotina</taxon>
        <taxon>Eurotiomycetes</taxon>
        <taxon>Eurotiomycetidae</taxon>
        <taxon>Eurotiales</taxon>
        <taxon>Aspergillaceae</taxon>
        <taxon>Aspergillus</taxon>
        <taxon>Aspergillus subgen. Fumigati</taxon>
    </lineage>
</organism>
<comment type="function">
    <text evidence="1">ATP-binding RNA helicase involved in the biogenesis of 60S ribosomal subunits and is required for the normal formation of 25S and 5.8S rRNAs.</text>
</comment>
<comment type="catalytic activity">
    <reaction>
        <text>ATP + H2O = ADP + phosphate + H(+)</text>
        <dbReference type="Rhea" id="RHEA:13065"/>
        <dbReference type="ChEBI" id="CHEBI:15377"/>
        <dbReference type="ChEBI" id="CHEBI:15378"/>
        <dbReference type="ChEBI" id="CHEBI:30616"/>
        <dbReference type="ChEBI" id="CHEBI:43474"/>
        <dbReference type="ChEBI" id="CHEBI:456216"/>
        <dbReference type="EC" id="3.6.4.13"/>
    </reaction>
</comment>
<comment type="subcellular location">
    <subcellularLocation>
        <location evidence="1">Nucleus</location>
        <location evidence="1">Nucleolus</location>
    </subcellularLocation>
</comment>
<comment type="domain">
    <text>The Q motif is unique to and characteristic of the DEAD box family of RNA helicases and controls ATP binding and hydrolysis.</text>
</comment>
<comment type="similarity">
    <text evidence="5">Belongs to the DEAD box helicase family. DDX24/MAK5 subfamily.</text>
</comment>
<name>MAK5_NEOFI</name>
<reference key="1">
    <citation type="journal article" date="2008" name="PLoS Genet.">
        <title>Genomic islands in the pathogenic filamentous fungus Aspergillus fumigatus.</title>
        <authorList>
            <person name="Fedorova N.D."/>
            <person name="Khaldi N."/>
            <person name="Joardar V.S."/>
            <person name="Maiti R."/>
            <person name="Amedeo P."/>
            <person name="Anderson M.J."/>
            <person name="Crabtree J."/>
            <person name="Silva J.C."/>
            <person name="Badger J.H."/>
            <person name="Albarraq A."/>
            <person name="Angiuoli S."/>
            <person name="Bussey H."/>
            <person name="Bowyer P."/>
            <person name="Cotty P.J."/>
            <person name="Dyer P.S."/>
            <person name="Egan A."/>
            <person name="Galens K."/>
            <person name="Fraser-Liggett C.M."/>
            <person name="Haas B.J."/>
            <person name="Inman J.M."/>
            <person name="Kent R."/>
            <person name="Lemieux S."/>
            <person name="Malavazi I."/>
            <person name="Orvis J."/>
            <person name="Roemer T."/>
            <person name="Ronning C.M."/>
            <person name="Sundaram J.P."/>
            <person name="Sutton G."/>
            <person name="Turner G."/>
            <person name="Venter J.C."/>
            <person name="White O.R."/>
            <person name="Whitty B.R."/>
            <person name="Youngman P."/>
            <person name="Wolfe K.H."/>
            <person name="Goldman G.H."/>
            <person name="Wortman J.R."/>
            <person name="Jiang B."/>
            <person name="Denning D.W."/>
            <person name="Nierman W.C."/>
        </authorList>
    </citation>
    <scope>NUCLEOTIDE SEQUENCE [LARGE SCALE GENOMIC DNA]</scope>
    <source>
        <strain>ATCC 1020 / DSM 3700 / CBS 544.65 / FGSC A1164 / JCM 1740 / NRRL 181 / WB 181</strain>
    </source>
</reference>
<sequence length="777" mass="84961">MGQKRQRDSKSSTFHAKKRKKAENATAPDSDDGWDGIVGADELNWKEVALPDHLEDAGGFFGLEEIEGVDIVRGSGNGEVKFKAVAGKPKKSILKKKAPEDENSEYDEEWSGFSDDDADRPENASSPAVEKPEKSDTKADKKSEKNADKKEAKDAKKKEAKAAKKEQKEKGSAIQHDTSINAGLSFAALQDTEEDDGADVSAWDSLGLSPEILTGLSKMKFASPTSVQEACIPQILEGHDVIGKASTGSGKTLAFGIPILEHYLEKKRDDISAEKEKKSEKDSTPIALILSPTRELAHQLSKHIGELIAQAPGVNARIALLTGGLSVQKQQRLLSGADIVIGTPGRVWEILSTGQGLIRKMQQIKFLVVDEADRLLSEGHFKEVEEILNALDRVEDGEVPGGENQASEEESDPSSERQTLVFSATFHRDLQQKLAGKGKWTGGDVMDKKESMDYLLQKLNFREEKPKFIDMNPISQMADNLKEGIVECGAMEKDLFLYTLLLYHPKHRTLVFTNSISAVRRLTKLLQTLQLPALALHSSMAQKARLRSVERFSSPSSDPSTILVATDVAARGLDIKGINLVIHYHAPRTADTYVHRSGRTARAGASGKSVIICGPDEMVGVVRLAAKVHANMANGKKLPLESLELDRRVVSRVKPRVSLASRITDANIAKEKISAEDNWLRNAAEDLGVEYDSEEFDESNGKGRGRGRGRHQKQKEVGSVSKAELAGLRAELKQLLSQRVNVGVSERYLTAGRVDIDALLRGEGNASFLGPVDPLHF</sequence>
<accession>A1DMT9</accession>
<evidence type="ECO:0000250" key="1"/>
<evidence type="ECO:0000255" key="2">
    <source>
        <dbReference type="PROSITE-ProRule" id="PRU00541"/>
    </source>
</evidence>
<evidence type="ECO:0000255" key="3">
    <source>
        <dbReference type="PROSITE-ProRule" id="PRU00542"/>
    </source>
</evidence>
<evidence type="ECO:0000256" key="4">
    <source>
        <dbReference type="SAM" id="MobiDB-lite"/>
    </source>
</evidence>
<evidence type="ECO:0000305" key="5"/>